<dbReference type="EMBL" id="CP000260">
    <property type="protein sequence ID" value="ABF33702.1"/>
    <property type="molecule type" value="Genomic_DNA"/>
</dbReference>
<dbReference type="SMR" id="Q1JHN4"/>
<dbReference type="KEGG" id="sph:MGAS10270_Spy0637"/>
<dbReference type="HOGENOM" id="CLU_084338_1_0_9"/>
<dbReference type="Proteomes" id="UP000002436">
    <property type="component" value="Chromosome"/>
</dbReference>
<dbReference type="GO" id="GO:0005886">
    <property type="term" value="C:plasma membrane"/>
    <property type="evidence" value="ECO:0007669"/>
    <property type="project" value="UniProtKB-SubCell"/>
</dbReference>
<dbReference type="GO" id="GO:0045259">
    <property type="term" value="C:proton-transporting ATP synthase complex"/>
    <property type="evidence" value="ECO:0007669"/>
    <property type="project" value="UniProtKB-KW"/>
</dbReference>
<dbReference type="GO" id="GO:0005524">
    <property type="term" value="F:ATP binding"/>
    <property type="evidence" value="ECO:0007669"/>
    <property type="project" value="UniProtKB-UniRule"/>
</dbReference>
<dbReference type="GO" id="GO:0046933">
    <property type="term" value="F:proton-transporting ATP synthase activity, rotational mechanism"/>
    <property type="evidence" value="ECO:0007669"/>
    <property type="project" value="UniProtKB-UniRule"/>
</dbReference>
<dbReference type="CDD" id="cd12152">
    <property type="entry name" value="F1-ATPase_delta"/>
    <property type="match status" value="1"/>
</dbReference>
<dbReference type="Gene3D" id="1.20.5.440">
    <property type="entry name" value="ATP synthase delta/epsilon subunit, C-terminal domain"/>
    <property type="match status" value="1"/>
</dbReference>
<dbReference type="Gene3D" id="2.60.15.10">
    <property type="entry name" value="F0F1 ATP synthase delta/epsilon subunit, N-terminal"/>
    <property type="match status" value="1"/>
</dbReference>
<dbReference type="HAMAP" id="MF_00530">
    <property type="entry name" value="ATP_synth_epsil_bac"/>
    <property type="match status" value="1"/>
</dbReference>
<dbReference type="InterPro" id="IPR001469">
    <property type="entry name" value="ATP_synth_F1_dsu/esu"/>
</dbReference>
<dbReference type="InterPro" id="IPR020546">
    <property type="entry name" value="ATP_synth_F1_dsu/esu_N"/>
</dbReference>
<dbReference type="InterPro" id="IPR020547">
    <property type="entry name" value="ATP_synth_F1_esu_C"/>
</dbReference>
<dbReference type="InterPro" id="IPR036771">
    <property type="entry name" value="ATPsynth_dsu/esu_N"/>
</dbReference>
<dbReference type="NCBIfam" id="TIGR01216">
    <property type="entry name" value="ATP_synt_epsi"/>
    <property type="match status" value="1"/>
</dbReference>
<dbReference type="NCBIfam" id="NF001846">
    <property type="entry name" value="PRK00571.1-3"/>
    <property type="match status" value="1"/>
</dbReference>
<dbReference type="PANTHER" id="PTHR13822">
    <property type="entry name" value="ATP SYNTHASE DELTA/EPSILON CHAIN"/>
    <property type="match status" value="1"/>
</dbReference>
<dbReference type="PANTHER" id="PTHR13822:SF10">
    <property type="entry name" value="ATP SYNTHASE EPSILON CHAIN, CHLOROPLASTIC"/>
    <property type="match status" value="1"/>
</dbReference>
<dbReference type="Pfam" id="PF00401">
    <property type="entry name" value="ATP-synt_DE"/>
    <property type="match status" value="1"/>
</dbReference>
<dbReference type="Pfam" id="PF02823">
    <property type="entry name" value="ATP-synt_DE_N"/>
    <property type="match status" value="1"/>
</dbReference>
<dbReference type="SUPFAM" id="SSF51344">
    <property type="entry name" value="Epsilon subunit of F1F0-ATP synthase N-terminal domain"/>
    <property type="match status" value="1"/>
</dbReference>
<organism>
    <name type="scientific">Streptococcus pyogenes serotype M2 (strain MGAS10270)</name>
    <dbReference type="NCBI Taxonomy" id="370552"/>
    <lineage>
        <taxon>Bacteria</taxon>
        <taxon>Bacillati</taxon>
        <taxon>Bacillota</taxon>
        <taxon>Bacilli</taxon>
        <taxon>Lactobacillales</taxon>
        <taxon>Streptococcaceae</taxon>
        <taxon>Streptococcus</taxon>
    </lineage>
</organism>
<reference key="1">
    <citation type="journal article" date="2006" name="Proc. Natl. Acad. Sci. U.S.A.">
        <title>Molecular genetic anatomy of inter- and intraserotype variation in the human bacterial pathogen group A Streptococcus.</title>
        <authorList>
            <person name="Beres S.B."/>
            <person name="Richter E.W."/>
            <person name="Nagiec M.J."/>
            <person name="Sumby P."/>
            <person name="Porcella S.F."/>
            <person name="DeLeo F.R."/>
            <person name="Musser J.M."/>
        </authorList>
    </citation>
    <scope>NUCLEOTIDE SEQUENCE [LARGE SCALE GENOMIC DNA]</scope>
    <source>
        <strain>MGAS10270</strain>
    </source>
</reference>
<name>ATPE_STRPD</name>
<sequence length="138" mass="15510">MTQMTVQVVTPDGIKYDHHAKCISVTTPDGEMGILPNHINLIAPLQVHEMKIRRGGEDEKVDWIAINGGIIEIKDNVVTIVADSAERDRDIDVSRAERAKLRAEREIAQAETTHNIDEVRRAKVALRRALNRINVSKK</sequence>
<protein>
    <recommendedName>
        <fullName evidence="1">ATP synthase epsilon chain</fullName>
    </recommendedName>
    <alternativeName>
        <fullName evidence="1">ATP synthase F1 sector epsilon subunit</fullName>
    </alternativeName>
    <alternativeName>
        <fullName evidence="1">F-ATPase epsilon subunit</fullName>
    </alternativeName>
</protein>
<evidence type="ECO:0000255" key="1">
    <source>
        <dbReference type="HAMAP-Rule" id="MF_00530"/>
    </source>
</evidence>
<comment type="function">
    <text evidence="1">Produces ATP from ADP in the presence of a proton gradient across the membrane.</text>
</comment>
<comment type="subunit">
    <text>F-type ATPases have 2 components, CF(1) - the catalytic core - and CF(0) - the membrane proton channel. CF(1) has five subunits: alpha(3), beta(3), gamma(1), delta(1), epsilon(1). CF(0) has three main subunits: a, b and c.</text>
</comment>
<comment type="subcellular location">
    <subcellularLocation>
        <location evidence="1">Cell membrane</location>
        <topology evidence="1">Peripheral membrane protein</topology>
    </subcellularLocation>
</comment>
<comment type="similarity">
    <text evidence="1">Belongs to the ATPase epsilon chain family.</text>
</comment>
<feature type="chain" id="PRO_0000265904" description="ATP synthase epsilon chain">
    <location>
        <begin position="1"/>
        <end position="138"/>
    </location>
</feature>
<accession>Q1JHN4</accession>
<keyword id="KW-0066">ATP synthesis</keyword>
<keyword id="KW-1003">Cell membrane</keyword>
<keyword id="KW-0139">CF(1)</keyword>
<keyword id="KW-0375">Hydrogen ion transport</keyword>
<keyword id="KW-0406">Ion transport</keyword>
<keyword id="KW-0472">Membrane</keyword>
<keyword id="KW-0813">Transport</keyword>
<gene>
    <name evidence="1" type="primary">atpC</name>
    <name type="ordered locus">MGAS10270_Spy0637</name>
</gene>
<proteinExistence type="inferred from homology"/>